<name>MORN_BOVIN</name>
<organism>
    <name type="scientific">Bos taurus</name>
    <name type="common">Bovine</name>
    <dbReference type="NCBI Taxonomy" id="9913"/>
    <lineage>
        <taxon>Eukaryota</taxon>
        <taxon>Metazoa</taxon>
        <taxon>Chordata</taxon>
        <taxon>Craniata</taxon>
        <taxon>Vertebrata</taxon>
        <taxon>Euteleostomi</taxon>
        <taxon>Mammalia</taxon>
        <taxon>Eutheria</taxon>
        <taxon>Laurasiatheria</taxon>
        <taxon>Artiodactyla</taxon>
        <taxon>Ruminantia</taxon>
        <taxon>Pecora</taxon>
        <taxon>Bovidae</taxon>
        <taxon>Bovinae</taxon>
        <taxon>Bos</taxon>
    </lineage>
</organism>
<proteinExistence type="evidence at protein level"/>
<comment type="function">
    <text evidence="1">Stimulates the proliferation of neural cells.</text>
</comment>
<comment type="subunit">
    <text evidence="1">May interact with SORL1 (via N-terminal ectodomain); this interaction is impaired in the presence of SORL1 propeptide.</text>
</comment>
<comment type="caution">
    <text evidence="2">This peptide was first isolated from nerve cells of hydra and was called head activator by the authors, because it induced head-specific growth and differentiation in this animal. It has been found in mammalian intestine and hypothalamus.</text>
</comment>
<reference key="1">
    <citation type="journal article" date="1981" name="Nature">
        <title>Conserved amino acid sequence of a neuropeptide, the head activator, from coelenterates to humans.</title>
        <authorList>
            <person name="Bodenmuller H."/>
            <person name="Schaller H.C."/>
        </authorList>
    </citation>
    <scope>PROTEIN SEQUENCE</scope>
</reference>
<reference key="2">
    <citation type="journal article" date="1981" name="FEBS Lett.">
        <title>Synthesis of a new neuropeptide, the head activator from hydra.</title>
        <authorList>
            <person name="Birr C."/>
            <person name="Zachmann B."/>
            <person name="Bodenmuller H."/>
            <person name="Schaller H.C."/>
        </authorList>
    </citation>
    <scope>SYNTHESIS</scope>
</reference>
<protein>
    <recommendedName>
        <fullName>Morphogenetic neuropeptide</fullName>
    </recommendedName>
    <alternativeName>
        <fullName>Head activator</fullName>
        <shortName>HA</shortName>
    </alternativeName>
</protein>
<accession>P69206</accession>
<accession>P01163</accession>
<keyword id="KW-0131">Cell cycle</keyword>
<keyword id="KW-0132">Cell division</keyword>
<keyword id="KW-0903">Direct protein sequencing</keyword>
<keyword id="KW-0339">Growth factor</keyword>
<keyword id="KW-0498">Mitosis</keyword>
<keyword id="KW-0873">Pyrrolidone carboxylic acid</keyword>
<keyword id="KW-1185">Reference proteome</keyword>
<dbReference type="PIR" id="C01427">
    <property type="entry name" value="YHBO"/>
</dbReference>
<dbReference type="InParanoid" id="P69206"/>
<dbReference type="Proteomes" id="UP000009136">
    <property type="component" value="Unplaced"/>
</dbReference>
<dbReference type="GO" id="GO:0008083">
    <property type="term" value="F:growth factor activity"/>
    <property type="evidence" value="ECO:0007669"/>
    <property type="project" value="UniProtKB-KW"/>
</dbReference>
<dbReference type="GO" id="GO:0051301">
    <property type="term" value="P:cell division"/>
    <property type="evidence" value="ECO:0007669"/>
    <property type="project" value="UniProtKB-KW"/>
</dbReference>
<sequence length="11" mass="1142">QPPGGSKVILF</sequence>
<evidence type="ECO:0000250" key="1">
    <source>
        <dbReference type="UniProtKB" id="P69208"/>
    </source>
</evidence>
<evidence type="ECO:0000305" key="2"/>
<feature type="peptide" id="PRO_0000044166" description="Morphogenetic neuropeptide">
    <location>
        <begin position="1"/>
        <end position="11"/>
    </location>
</feature>
<feature type="modified residue" description="Pyrrolidone carboxylic acid" evidence="1">
    <location>
        <position position="1"/>
    </location>
</feature>